<proteinExistence type="evidence at transcript level"/>
<keyword id="KW-0963">Cytoplasm</keyword>
<keyword id="KW-0449">Lipoprotein</keyword>
<keyword id="KW-0472">Membrane</keyword>
<keyword id="KW-0519">Myristate</keyword>
<keyword id="KW-1185">Reference proteome</keyword>
<sequence length="357" mass="40675">MGGAVSAGEDNDDLIDNLKEAQYIRTERVEQAFRAIDRGDYYLEGYRDNAYKDLAWKHGNIHLSAPCIYSEVMEALKLQPGLSFLNLGSGTGYLSTMVGLILGPFGINHGIELHSDVVEYAKEKLESFIKNSDSFDKFEFCEPAFVVGNCLQIASDSHQYDRIYCGAGVQKDHENYMKILLKVGGILVMPIEDQLTQIMRTGQNTWESKNILAVSFAPLVQPSKNDNGKPDSVGLPPCAVRNLQDLARIYIRRTLRNFINDEMQAKGIPQRAPPKRKRKRVKQRINTYVFVGNQLIPQPLDSEEDEKMEEDNKEEEEKDHNEAMKPEEPPQNLLREKIMKLPLPESLKAYLTYFRDK</sequence>
<name>PCMD1_PONAB</name>
<accession>Q5R7E5</accession>
<gene>
    <name type="primary">PCMTD1</name>
</gene>
<dbReference type="EMBL" id="CR859527">
    <property type="protein sequence ID" value="CAH91695.1"/>
    <property type="molecule type" value="mRNA"/>
</dbReference>
<dbReference type="EMBL" id="CR860173">
    <property type="protein sequence ID" value="CAH92315.1"/>
    <property type="molecule type" value="mRNA"/>
</dbReference>
<dbReference type="RefSeq" id="NP_001125991.1">
    <property type="nucleotide sequence ID" value="NM_001132519.1"/>
</dbReference>
<dbReference type="RefSeq" id="XP_009242068.1">
    <property type="nucleotide sequence ID" value="XM_009243793.1"/>
</dbReference>
<dbReference type="RefSeq" id="XP_024106342.1">
    <property type="nucleotide sequence ID" value="XM_024250574.3"/>
</dbReference>
<dbReference type="RefSeq" id="XP_054416886.1">
    <property type="nucleotide sequence ID" value="XM_054560911.2"/>
</dbReference>
<dbReference type="RefSeq" id="XP_054416887.1">
    <property type="nucleotide sequence ID" value="XM_054560912.2"/>
</dbReference>
<dbReference type="SMR" id="Q5R7E5"/>
<dbReference type="FunCoup" id="Q5R7E5">
    <property type="interactions" value="378"/>
</dbReference>
<dbReference type="STRING" id="9601.ENSPPYP00000020838"/>
<dbReference type="Ensembl" id="ENSPPYT00000051845.1">
    <property type="protein sequence ID" value="ENSPPYP00000042768.1"/>
    <property type="gene ID" value="ENSPPYG00000041146.1"/>
</dbReference>
<dbReference type="GeneID" id="100172930"/>
<dbReference type="KEGG" id="pon:100172930"/>
<dbReference type="CTD" id="115294"/>
<dbReference type="eggNOG" id="KOG1661">
    <property type="taxonomic scope" value="Eukaryota"/>
</dbReference>
<dbReference type="GeneTree" id="ENSGT00950000183032"/>
<dbReference type="HOGENOM" id="CLU_029295_0_0_1"/>
<dbReference type="InParanoid" id="Q5R7E5"/>
<dbReference type="OMA" id="QSTWDSR"/>
<dbReference type="OrthoDB" id="10257972at2759"/>
<dbReference type="TreeFam" id="TF329329"/>
<dbReference type="Proteomes" id="UP000001595">
    <property type="component" value="Chromosome 8"/>
</dbReference>
<dbReference type="GO" id="GO:0031466">
    <property type="term" value="C:Cul5-RING ubiquitin ligase complex"/>
    <property type="evidence" value="ECO:0000250"/>
    <property type="project" value="UniProtKB"/>
</dbReference>
<dbReference type="GO" id="GO:0005737">
    <property type="term" value="C:cytoplasm"/>
    <property type="evidence" value="ECO:0007669"/>
    <property type="project" value="UniProtKB-SubCell"/>
</dbReference>
<dbReference type="GO" id="GO:0016020">
    <property type="term" value="C:membrane"/>
    <property type="evidence" value="ECO:0007669"/>
    <property type="project" value="UniProtKB-SubCell"/>
</dbReference>
<dbReference type="GO" id="GO:1990756">
    <property type="term" value="F:ubiquitin-like ligase-substrate adaptor activity"/>
    <property type="evidence" value="ECO:0000250"/>
    <property type="project" value="UniProtKB"/>
</dbReference>
<dbReference type="GO" id="GO:0016567">
    <property type="term" value="P:protein ubiquitination"/>
    <property type="evidence" value="ECO:0000250"/>
    <property type="project" value="UniProtKB"/>
</dbReference>
<dbReference type="FunFam" id="3.40.50.150:FF:000015">
    <property type="entry name" value="Protein-L-isoaspartate (D-aspartate) O-methyltransferase domain-containing 1"/>
    <property type="match status" value="1"/>
</dbReference>
<dbReference type="Gene3D" id="3.40.50.150">
    <property type="entry name" value="Vaccinia Virus protein VP39"/>
    <property type="match status" value="1"/>
</dbReference>
<dbReference type="InterPro" id="IPR000682">
    <property type="entry name" value="PCMT"/>
</dbReference>
<dbReference type="InterPro" id="IPR029063">
    <property type="entry name" value="SAM-dependent_MTases_sf"/>
</dbReference>
<dbReference type="PANTHER" id="PTHR11579">
    <property type="entry name" value="PROTEIN-L-ISOASPARTATE O-METHYLTRANSFERASE"/>
    <property type="match status" value="1"/>
</dbReference>
<dbReference type="PANTHER" id="PTHR11579:SF4">
    <property type="entry name" value="PROTEIN-L-ISOASPARTATE O-METHYLTRANSFERASE DOMAIN-CONTAINING PROTEIN 1"/>
    <property type="match status" value="1"/>
</dbReference>
<dbReference type="Pfam" id="PF01135">
    <property type="entry name" value="PCMT"/>
    <property type="match status" value="1"/>
</dbReference>
<dbReference type="SUPFAM" id="SSF53335">
    <property type="entry name" value="S-adenosyl-L-methionine-dependent methyltransferases"/>
    <property type="match status" value="1"/>
</dbReference>
<evidence type="ECO:0000250" key="1">
    <source>
        <dbReference type="UniProtKB" id="P22061"/>
    </source>
</evidence>
<evidence type="ECO:0000250" key="2">
    <source>
        <dbReference type="UniProtKB" id="Q27869"/>
    </source>
</evidence>
<evidence type="ECO:0000250" key="3">
    <source>
        <dbReference type="UniProtKB" id="Q96MG8"/>
    </source>
</evidence>
<evidence type="ECO:0000256" key="4">
    <source>
        <dbReference type="SAM" id="MobiDB-lite"/>
    </source>
</evidence>
<evidence type="ECO:0000305" key="5"/>
<feature type="initiator methionine" description="Removed" evidence="3">
    <location>
        <position position="1"/>
    </location>
</feature>
<feature type="chain" id="PRO_0000293540" description="Protein-L-isoaspartate O-methyltransferase domain-containing protein 1">
    <location>
        <begin position="2"/>
        <end position="357"/>
    </location>
</feature>
<feature type="region of interest" description="AdoMet binding motif" evidence="3">
    <location>
        <begin position="85"/>
        <end position="94"/>
    </location>
</feature>
<feature type="region of interest" description="AdoMet binding motif" evidence="3">
    <location>
        <begin position="160"/>
        <end position="164"/>
    </location>
</feature>
<feature type="region of interest" description="AdoMet binding motif" evidence="3">
    <location>
        <begin position="181"/>
        <end position="191"/>
    </location>
</feature>
<feature type="region of interest" description="BC-box" evidence="3">
    <location>
        <begin position="240"/>
        <end position="250"/>
    </location>
</feature>
<feature type="region of interest" description="Disordered" evidence="4">
    <location>
        <begin position="299"/>
        <end position="333"/>
    </location>
</feature>
<feature type="region of interest" description="CUL-box" evidence="3">
    <location>
        <begin position="341"/>
        <end position="344"/>
    </location>
</feature>
<feature type="compositionally biased region" description="Acidic residues" evidence="4">
    <location>
        <begin position="301"/>
        <end position="317"/>
    </location>
</feature>
<feature type="compositionally biased region" description="Basic and acidic residues" evidence="4">
    <location>
        <begin position="318"/>
        <end position="333"/>
    </location>
</feature>
<feature type="active site" evidence="2">
    <location>
        <position position="64"/>
    </location>
</feature>
<feature type="lipid moiety-binding region" description="N-myristoyl glycine" evidence="3">
    <location>
        <position position="2"/>
    </location>
</feature>
<comment type="function">
    <text evidence="3">Substrate recognition component of an ECS (Elongin BC-CUL5-SOCS-box protein) E3 ubiquitin ligase complex which mediates the ubiquitination and subsequent proteasomal degradation of target proteins. Specifically binds to the methyltransferase cofactor S-adenosylmethionine (AdoMet) via the N-terminal AdoMet binding motif, but does not display methyltransferase activity. May provide an alternate maintenance pathway for modified proteins by acting as a damage-specific E3 ubiquitin ligase adaptor protein.</text>
</comment>
<comment type="subunit">
    <text evidence="3">Component of the probable ECS(PCMTD1) E3 ubiquitin-protein ligase complex, at least composed of CUL5, ELOB, ELOC, RBX2 and PCMTD1. Interacts (via the BC-box) with ELOB and ELOC; the interaction is direct and stabilizes PCMTD1.</text>
</comment>
<comment type="subcellular location">
    <subcellularLocation>
        <location evidence="1">Cytoplasm</location>
    </subcellularLocation>
    <subcellularLocation>
        <location evidence="3">Membrane</location>
        <topology evidence="3">Lipid-anchor</topology>
    </subcellularLocation>
</comment>
<comment type="domain">
    <text evidence="3">At its N-terminus, contains L-isoaspartate and S-adenosylmethionine (AdoMet) binding motifs. Also contains an extended SOCS box motif, where the Cul-box is separated from the BC-box by ~90 residues, within its C-terminus.</text>
</comment>
<comment type="similarity">
    <text evidence="5">Belongs to the methyltransferase superfamily. L-isoaspartyl/D-aspartyl protein methyltransferase family.</text>
</comment>
<comment type="caution">
    <text evidence="3">Although the active site residue Ser is conserved, appears to lack catalytic activity in vitro.</text>
</comment>
<organism>
    <name type="scientific">Pongo abelii</name>
    <name type="common">Sumatran orangutan</name>
    <name type="synonym">Pongo pygmaeus abelii</name>
    <dbReference type="NCBI Taxonomy" id="9601"/>
    <lineage>
        <taxon>Eukaryota</taxon>
        <taxon>Metazoa</taxon>
        <taxon>Chordata</taxon>
        <taxon>Craniata</taxon>
        <taxon>Vertebrata</taxon>
        <taxon>Euteleostomi</taxon>
        <taxon>Mammalia</taxon>
        <taxon>Eutheria</taxon>
        <taxon>Euarchontoglires</taxon>
        <taxon>Primates</taxon>
        <taxon>Haplorrhini</taxon>
        <taxon>Catarrhini</taxon>
        <taxon>Hominidae</taxon>
        <taxon>Pongo</taxon>
    </lineage>
</organism>
<reference key="1">
    <citation type="submission" date="2004-11" db="EMBL/GenBank/DDBJ databases">
        <authorList>
            <consortium name="The German cDNA consortium"/>
        </authorList>
    </citation>
    <scope>NUCLEOTIDE SEQUENCE [LARGE SCALE MRNA]</scope>
    <source>
        <tissue>Brain cortex</tissue>
        <tissue>Kidney</tissue>
    </source>
</reference>
<protein>
    <recommendedName>
        <fullName>Protein-L-isoaspartate O-methyltransferase domain-containing protein 1</fullName>
    </recommendedName>
</protein>